<keyword id="KW-0131">Cell cycle</keyword>
<keyword id="KW-0132">Cell division</keyword>
<keyword id="KW-0963">Cytoplasm</keyword>
<keyword id="KW-0238">DNA-binding</keyword>
<comment type="function">
    <text evidence="1">Required for spatial organization of the terminus region of the chromosome (Ter macrodomain) during the cell cycle. Prevents early segregation of duplicated Ter macrodomains during cell division. Binds specifically to matS, which is a 13 bp signature motif repeated within the Ter macrodomain.</text>
</comment>
<comment type="subunit">
    <text evidence="1">Homodimer.</text>
</comment>
<comment type="subcellular location">
    <subcellularLocation>
        <location evidence="1">Cytoplasm</location>
    </subcellularLocation>
</comment>
<comment type="similarity">
    <text evidence="1">Belongs to the MatP family.</text>
</comment>
<sequence length="150" mass="17693">MKYQQLENLESGWKWKYLVKKHREGELITRYIEASAAQEAVDVLLSLENEPVLVNGWIDKHMNPELVNRMKQTIRARRKRHFNAEHQHTRKKSIDLEFIVWQRLAGLAQRRGKTLSETIVQLIEDAENKEKYANKMSSLKQDLQALLGKE</sequence>
<protein>
    <recommendedName>
        <fullName evidence="1">Macrodomain Ter protein</fullName>
    </recommendedName>
</protein>
<reference key="1">
    <citation type="journal article" date="2009" name="PLoS Genet.">
        <title>Organised genome dynamics in the Escherichia coli species results in highly diverse adaptive paths.</title>
        <authorList>
            <person name="Touchon M."/>
            <person name="Hoede C."/>
            <person name="Tenaillon O."/>
            <person name="Barbe V."/>
            <person name="Baeriswyl S."/>
            <person name="Bidet P."/>
            <person name="Bingen E."/>
            <person name="Bonacorsi S."/>
            <person name="Bouchier C."/>
            <person name="Bouvet O."/>
            <person name="Calteau A."/>
            <person name="Chiapello H."/>
            <person name="Clermont O."/>
            <person name="Cruveiller S."/>
            <person name="Danchin A."/>
            <person name="Diard M."/>
            <person name="Dossat C."/>
            <person name="Karoui M.E."/>
            <person name="Frapy E."/>
            <person name="Garry L."/>
            <person name="Ghigo J.M."/>
            <person name="Gilles A.M."/>
            <person name="Johnson J."/>
            <person name="Le Bouguenec C."/>
            <person name="Lescat M."/>
            <person name="Mangenot S."/>
            <person name="Martinez-Jehanne V."/>
            <person name="Matic I."/>
            <person name="Nassif X."/>
            <person name="Oztas S."/>
            <person name="Petit M.A."/>
            <person name="Pichon C."/>
            <person name="Rouy Z."/>
            <person name="Ruf C.S."/>
            <person name="Schneider D."/>
            <person name="Tourret J."/>
            <person name="Vacherie B."/>
            <person name="Vallenet D."/>
            <person name="Medigue C."/>
            <person name="Rocha E.P.C."/>
            <person name="Denamur E."/>
        </authorList>
    </citation>
    <scope>NUCLEOTIDE SEQUENCE [LARGE SCALE GENOMIC DNA]</scope>
    <source>
        <strain>UMN026 / ExPEC</strain>
    </source>
</reference>
<name>MATP_ECOLU</name>
<dbReference type="EMBL" id="CU928163">
    <property type="protein sequence ID" value="CAR12354.1"/>
    <property type="molecule type" value="Genomic_DNA"/>
</dbReference>
<dbReference type="RefSeq" id="WP_000877161.1">
    <property type="nucleotide sequence ID" value="NC_011751.1"/>
</dbReference>
<dbReference type="RefSeq" id="YP_002411898.1">
    <property type="nucleotide sequence ID" value="NC_011751.1"/>
</dbReference>
<dbReference type="SMR" id="B7N3B8"/>
<dbReference type="STRING" id="585056.ECUMN_1145"/>
<dbReference type="GeneID" id="93776458"/>
<dbReference type="KEGG" id="eum:ECUMN_1145"/>
<dbReference type="PATRIC" id="fig|585056.7.peg.1342"/>
<dbReference type="HOGENOM" id="CLU_142157_0_0_6"/>
<dbReference type="Proteomes" id="UP000007097">
    <property type="component" value="Chromosome"/>
</dbReference>
<dbReference type="GO" id="GO:0005737">
    <property type="term" value="C:cytoplasm"/>
    <property type="evidence" value="ECO:0007669"/>
    <property type="project" value="UniProtKB-SubCell"/>
</dbReference>
<dbReference type="GO" id="GO:0043565">
    <property type="term" value="F:sequence-specific DNA binding"/>
    <property type="evidence" value="ECO:0007669"/>
    <property type="project" value="UniProtKB-UniRule"/>
</dbReference>
<dbReference type="GO" id="GO:0051301">
    <property type="term" value="P:cell division"/>
    <property type="evidence" value="ECO:0007669"/>
    <property type="project" value="UniProtKB-UniRule"/>
</dbReference>
<dbReference type="GO" id="GO:0006355">
    <property type="term" value="P:regulation of DNA-templated transcription"/>
    <property type="evidence" value="ECO:0007669"/>
    <property type="project" value="InterPro"/>
</dbReference>
<dbReference type="FunFam" id="1.10.1220.10:FF:000004">
    <property type="entry name" value="Macrodomain Ter protein"/>
    <property type="match status" value="1"/>
</dbReference>
<dbReference type="FunFam" id="1.20.1270.380:FF:000001">
    <property type="entry name" value="Macrodomain Ter protein"/>
    <property type="match status" value="1"/>
</dbReference>
<dbReference type="Gene3D" id="1.20.1270.380">
    <property type="entry name" value="MatP, N-terminal domain"/>
    <property type="match status" value="1"/>
</dbReference>
<dbReference type="Gene3D" id="1.10.1220.10">
    <property type="entry name" value="Met repressor-like"/>
    <property type="match status" value="1"/>
</dbReference>
<dbReference type="HAMAP" id="MF_01073">
    <property type="entry name" value="MatP"/>
    <property type="match status" value="1"/>
</dbReference>
<dbReference type="InterPro" id="IPR013321">
    <property type="entry name" value="Arc_rbn_hlx_hlx"/>
</dbReference>
<dbReference type="InterPro" id="IPR009390">
    <property type="entry name" value="MatP"/>
</dbReference>
<dbReference type="InterPro" id="IPR035375">
    <property type="entry name" value="MatP_C"/>
</dbReference>
<dbReference type="InterPro" id="IPR035087">
    <property type="entry name" value="MatP_N"/>
</dbReference>
<dbReference type="InterPro" id="IPR038339">
    <property type="entry name" value="MatP_N_sf"/>
</dbReference>
<dbReference type="NCBIfam" id="NF003471">
    <property type="entry name" value="PRK05097.1"/>
    <property type="match status" value="1"/>
</dbReference>
<dbReference type="Pfam" id="PF06303">
    <property type="entry name" value="MatP"/>
    <property type="match status" value="1"/>
</dbReference>
<dbReference type="Pfam" id="PF17414">
    <property type="entry name" value="MatP_C"/>
    <property type="match status" value="1"/>
</dbReference>
<feature type="chain" id="PRO_1000136667" description="Macrodomain Ter protein">
    <location>
        <begin position="1"/>
        <end position="150"/>
    </location>
</feature>
<gene>
    <name evidence="1" type="primary">matP</name>
    <name type="ordered locus">ECUMN_1145</name>
</gene>
<evidence type="ECO:0000255" key="1">
    <source>
        <dbReference type="HAMAP-Rule" id="MF_01073"/>
    </source>
</evidence>
<accession>B7N3B8</accession>
<organism>
    <name type="scientific">Escherichia coli O17:K52:H18 (strain UMN026 / ExPEC)</name>
    <dbReference type="NCBI Taxonomy" id="585056"/>
    <lineage>
        <taxon>Bacteria</taxon>
        <taxon>Pseudomonadati</taxon>
        <taxon>Pseudomonadota</taxon>
        <taxon>Gammaproteobacteria</taxon>
        <taxon>Enterobacterales</taxon>
        <taxon>Enterobacteriaceae</taxon>
        <taxon>Escherichia</taxon>
    </lineage>
</organism>
<proteinExistence type="inferred from homology"/>